<sequence>MQAFGPPNEGPLQGLVASRIETYGGRHQTSAHSTAGNLFPRGGPGVDPSRRRLQHYVPFAKGSGQTRGMSPLVLREPDPEKRHGSYFGVGPPHSPKLKEVTRAHELEIRLHTFSMFGMPRLPPEDRRHWEIGEGGDSALTMEKSWKELVLEHKEMNRQLCHQQEALWELLTTELIYLRKLKIMTDLLAAGLLNLQRVGLLTEVSAETLFGNVPNLIRAHRRFWEEVLQPILEDTRTSGQPLDPVSLQNGFLTFGQRFQPYVQYCLRVKQTMAYAREQQDTNPLFHTFVQWCEKHKRSGRQTLGDLLIKPHQRITKYPLLLQAVRKRSPEPRAQEALNAMIEAVESFLRHINGQVRQGEEQESLMAVAQRIGPYEVLEPSSEEVEKNLRPFSTLDLMTPVLGVAPEYTRQLLLEGPVRVKEGREGKMDVYLFLFSDVLLVTKPQRKADRAKVIRPPLMLEKLVCRPLRDPNSFLLIHLTEFQCVSSALTVHCPSSTERARWLEKTQHAQTTLQKLKGEQYIQQKRELLALYRNQGTESPSTRPSTPSPSPEDSQSSAEGRTLEFAIIPRLVVTEDTDEDTPSMPDDASDSGYGTLIPSSPKDSHSPLNRLRSKALRRDPRLTFSTLELRDVPLRPQPPDPQAPQRRSAPELPEGILRGGSLPRRAPPIWSEEEDETLASGNVVVETLHRAQRRSPLPHSPTHTDSAGESPWESSDEDEGLLSPELRPRSLREDMLREIREELANQRIDGASEPEPGNGKPRRLTLAQLQRMRVPHIIQLDTPLSTSEV</sequence>
<dbReference type="EMBL" id="AC140324">
    <property type="status" value="NOT_ANNOTATED_CDS"/>
    <property type="molecule type" value="Genomic_DNA"/>
</dbReference>
<dbReference type="EMBL" id="BC026778">
    <property type="protein sequence ID" value="AAH26778.1"/>
    <property type="molecule type" value="mRNA"/>
</dbReference>
<dbReference type="CCDS" id="CCDS39642.1"/>
<dbReference type="RefSeq" id="NP_941006.2">
    <property type="nucleotide sequence ID" value="NM_198604.3"/>
</dbReference>
<dbReference type="RefSeq" id="XP_006505930.1">
    <property type="nucleotide sequence ID" value="XM_006505867.3"/>
</dbReference>
<dbReference type="SMR" id="Q8R0J1"/>
<dbReference type="BioGRID" id="229446">
    <property type="interactions" value="10"/>
</dbReference>
<dbReference type="FunCoup" id="Q8R0J1">
    <property type="interactions" value="43"/>
</dbReference>
<dbReference type="STRING" id="10090.ENSMUSP00000037004"/>
<dbReference type="iPTMnet" id="Q8R0J1"/>
<dbReference type="PhosphoSitePlus" id="Q8R0J1"/>
<dbReference type="PaxDb" id="10090-ENSMUSP00000037004"/>
<dbReference type="ProteomicsDB" id="289747"/>
<dbReference type="Antibodypedia" id="49879">
    <property type="antibodies" value="135 antibodies from 21 providers"/>
</dbReference>
<dbReference type="DNASU" id="213522"/>
<dbReference type="Ensembl" id="ENSMUST00000042647.7">
    <property type="protein sequence ID" value="ENSMUSP00000037004.7"/>
    <property type="gene ID" value="ENSMUSG00000038167.7"/>
</dbReference>
<dbReference type="GeneID" id="213522"/>
<dbReference type="KEGG" id="mmu:213522"/>
<dbReference type="UCSC" id="uc009dum.1">
    <property type="organism name" value="mouse"/>
</dbReference>
<dbReference type="AGR" id="MGI:2682298"/>
<dbReference type="CTD" id="55200"/>
<dbReference type="MGI" id="MGI:2682298">
    <property type="gene designation" value="Plekhg6"/>
</dbReference>
<dbReference type="VEuPathDB" id="HostDB:ENSMUSG00000038167"/>
<dbReference type="eggNOG" id="KOG3521">
    <property type="taxonomic scope" value="Eukaryota"/>
</dbReference>
<dbReference type="GeneTree" id="ENSGT00940000161250"/>
<dbReference type="HOGENOM" id="CLU_021968_1_0_1"/>
<dbReference type="InParanoid" id="Q8R0J1"/>
<dbReference type="OMA" id="SPWESSE"/>
<dbReference type="OrthoDB" id="5585231at2759"/>
<dbReference type="PhylomeDB" id="Q8R0J1"/>
<dbReference type="TreeFam" id="TF316755"/>
<dbReference type="Reactome" id="R-MMU-8980692">
    <property type="pathway name" value="RHOA GTPase cycle"/>
</dbReference>
<dbReference type="Reactome" id="R-MMU-9013149">
    <property type="pathway name" value="RAC1 GTPase cycle"/>
</dbReference>
<dbReference type="BioGRID-ORCS" id="213522">
    <property type="hits" value="2 hits in 76 CRISPR screens"/>
</dbReference>
<dbReference type="ChiTaRS" id="Plekhg6">
    <property type="organism name" value="mouse"/>
</dbReference>
<dbReference type="PRO" id="PR:Q8R0J1"/>
<dbReference type="Proteomes" id="UP000000589">
    <property type="component" value="Chromosome 6"/>
</dbReference>
<dbReference type="RNAct" id="Q8R0J1">
    <property type="molecule type" value="protein"/>
</dbReference>
<dbReference type="Bgee" id="ENSMUSG00000038167">
    <property type="expression patterns" value="Expressed in small intestine Peyer's patch and 92 other cell types or tissues"/>
</dbReference>
<dbReference type="GO" id="GO:0030054">
    <property type="term" value="C:cell junction"/>
    <property type="evidence" value="ECO:0007669"/>
    <property type="project" value="Ensembl"/>
</dbReference>
<dbReference type="GO" id="GO:0005813">
    <property type="term" value="C:centrosome"/>
    <property type="evidence" value="ECO:0007669"/>
    <property type="project" value="Ensembl"/>
</dbReference>
<dbReference type="GO" id="GO:0032154">
    <property type="term" value="C:cleavage furrow"/>
    <property type="evidence" value="ECO:0007669"/>
    <property type="project" value="UniProtKB-SubCell"/>
</dbReference>
<dbReference type="GO" id="GO:0005737">
    <property type="term" value="C:cytoplasm"/>
    <property type="evidence" value="ECO:0007669"/>
    <property type="project" value="UniProtKB-KW"/>
</dbReference>
<dbReference type="GO" id="GO:0005902">
    <property type="term" value="C:microvillus"/>
    <property type="evidence" value="ECO:0007669"/>
    <property type="project" value="UniProtKB-SubCell"/>
</dbReference>
<dbReference type="GO" id="GO:0005819">
    <property type="term" value="C:spindle"/>
    <property type="evidence" value="ECO:0007669"/>
    <property type="project" value="UniProtKB-SubCell"/>
</dbReference>
<dbReference type="GO" id="GO:0005096">
    <property type="term" value="F:GTPase activator activity"/>
    <property type="evidence" value="ECO:0007669"/>
    <property type="project" value="UniProtKB-KW"/>
</dbReference>
<dbReference type="GO" id="GO:0005085">
    <property type="term" value="F:guanyl-nucleotide exchange factor activity"/>
    <property type="evidence" value="ECO:0007669"/>
    <property type="project" value="InterPro"/>
</dbReference>
<dbReference type="CDD" id="cd13244">
    <property type="entry name" value="PH_PLEKHG5_G6"/>
    <property type="match status" value="1"/>
</dbReference>
<dbReference type="CDD" id="cd00160">
    <property type="entry name" value="RhoGEF"/>
    <property type="match status" value="1"/>
</dbReference>
<dbReference type="FunFam" id="2.30.29.30:FF:000141">
    <property type="entry name" value="Pleckstrin homology domain-containing family G member 5"/>
    <property type="match status" value="1"/>
</dbReference>
<dbReference type="FunFam" id="1.20.900.10:FF:000017">
    <property type="entry name" value="pleckstrin homology domain-containing family G member 5 isoform X1"/>
    <property type="match status" value="1"/>
</dbReference>
<dbReference type="Gene3D" id="1.20.900.10">
    <property type="entry name" value="Dbl homology (DH) domain"/>
    <property type="match status" value="1"/>
</dbReference>
<dbReference type="Gene3D" id="2.30.29.30">
    <property type="entry name" value="Pleckstrin-homology domain (PH domain)/Phosphotyrosine-binding domain (PTB)"/>
    <property type="match status" value="1"/>
</dbReference>
<dbReference type="InterPro" id="IPR035899">
    <property type="entry name" value="DBL_dom_sf"/>
</dbReference>
<dbReference type="InterPro" id="IPR000219">
    <property type="entry name" value="DH_dom"/>
</dbReference>
<dbReference type="InterPro" id="IPR011993">
    <property type="entry name" value="PH-like_dom_sf"/>
</dbReference>
<dbReference type="InterPro" id="IPR001849">
    <property type="entry name" value="PH_domain"/>
</dbReference>
<dbReference type="InterPro" id="IPR042918">
    <property type="entry name" value="PLEKHG6"/>
</dbReference>
<dbReference type="InterPro" id="IPR055251">
    <property type="entry name" value="SOS1_NGEF_PH"/>
</dbReference>
<dbReference type="PANTHER" id="PTHR47671">
    <property type="entry name" value="PLECKSTRIN DOMAIN-CONTAINING FAMILY G MEMBER 6"/>
    <property type="match status" value="1"/>
</dbReference>
<dbReference type="PANTHER" id="PTHR47671:SF1">
    <property type="entry name" value="PLECKSTRIN HOMOLOGY DOMAIN-CONTAINING FAMILY G MEMBER 6"/>
    <property type="match status" value="1"/>
</dbReference>
<dbReference type="Pfam" id="PF00621">
    <property type="entry name" value="RhoGEF"/>
    <property type="match status" value="1"/>
</dbReference>
<dbReference type="Pfam" id="PF22697">
    <property type="entry name" value="SOS1_NGEF_PH"/>
    <property type="match status" value="1"/>
</dbReference>
<dbReference type="SMART" id="SM00233">
    <property type="entry name" value="PH"/>
    <property type="match status" value="1"/>
</dbReference>
<dbReference type="SMART" id="SM00325">
    <property type="entry name" value="RhoGEF"/>
    <property type="match status" value="1"/>
</dbReference>
<dbReference type="SUPFAM" id="SSF48065">
    <property type="entry name" value="DBL homology domain (DH-domain)"/>
    <property type="match status" value="1"/>
</dbReference>
<dbReference type="SUPFAM" id="SSF50729">
    <property type="entry name" value="PH domain-like"/>
    <property type="match status" value="1"/>
</dbReference>
<dbReference type="PROSITE" id="PS50010">
    <property type="entry name" value="DH_2"/>
    <property type="match status" value="1"/>
</dbReference>
<dbReference type="PROSITE" id="PS50003">
    <property type="entry name" value="PH_DOMAIN"/>
    <property type="match status" value="1"/>
</dbReference>
<reference key="1">
    <citation type="journal article" date="2009" name="PLoS Biol.">
        <title>Lineage-specific biology revealed by a finished genome assembly of the mouse.</title>
        <authorList>
            <person name="Church D.M."/>
            <person name="Goodstadt L."/>
            <person name="Hillier L.W."/>
            <person name="Zody M.C."/>
            <person name="Goldstein S."/>
            <person name="She X."/>
            <person name="Bult C.J."/>
            <person name="Agarwala R."/>
            <person name="Cherry J.L."/>
            <person name="DiCuccio M."/>
            <person name="Hlavina W."/>
            <person name="Kapustin Y."/>
            <person name="Meric P."/>
            <person name="Maglott D."/>
            <person name="Birtle Z."/>
            <person name="Marques A.C."/>
            <person name="Graves T."/>
            <person name="Zhou S."/>
            <person name="Teague B."/>
            <person name="Potamousis K."/>
            <person name="Churas C."/>
            <person name="Place M."/>
            <person name="Herschleb J."/>
            <person name="Runnheim R."/>
            <person name="Forrest D."/>
            <person name="Amos-Landgraf J."/>
            <person name="Schwartz D.C."/>
            <person name="Cheng Z."/>
            <person name="Lindblad-Toh K."/>
            <person name="Eichler E.E."/>
            <person name="Ponting C.P."/>
        </authorList>
    </citation>
    <scope>NUCLEOTIDE SEQUENCE [LARGE SCALE GENOMIC DNA]</scope>
    <source>
        <strain>C57BL/6J</strain>
    </source>
</reference>
<reference key="2">
    <citation type="journal article" date="2004" name="Genome Res.">
        <title>The status, quality, and expansion of the NIH full-length cDNA project: the Mammalian Gene Collection (MGC).</title>
        <authorList>
            <consortium name="The MGC Project Team"/>
        </authorList>
    </citation>
    <scope>NUCLEOTIDE SEQUENCE [LARGE SCALE MRNA]</scope>
    <source>
        <strain>FVB/N</strain>
        <tissue>Liver</tissue>
    </source>
</reference>
<accession>Q8R0J1</accession>
<accession>E9QJZ0</accession>
<protein>
    <recommendedName>
        <fullName>Pleckstrin homology domain-containing family G member 6</fullName>
        <shortName>PH domain-containing family G member 6</shortName>
    </recommendedName>
</protein>
<feature type="chain" id="PRO_0000307913" description="Pleckstrin homology domain-containing family G member 6">
    <location>
        <begin position="1"/>
        <end position="787"/>
    </location>
</feature>
<feature type="domain" description="DH" evidence="3">
    <location>
        <begin position="161"/>
        <end position="353"/>
    </location>
</feature>
<feature type="domain" description="PH" evidence="4">
    <location>
        <begin position="409"/>
        <end position="509"/>
    </location>
</feature>
<feature type="region of interest" description="Disordered" evidence="5">
    <location>
        <begin position="533"/>
        <end position="762"/>
    </location>
</feature>
<feature type="compositionally biased region" description="Low complexity" evidence="5">
    <location>
        <begin position="535"/>
        <end position="557"/>
    </location>
</feature>
<feature type="compositionally biased region" description="Basic and acidic residues" evidence="5">
    <location>
        <begin position="724"/>
        <end position="742"/>
    </location>
</feature>
<feature type="sequence conflict" description="In Ref. 2; AAH26778." evidence="6" ref="2">
    <original>S</original>
    <variation>G</variation>
    <location>
        <position position="137"/>
    </location>
</feature>
<feature type="sequence conflict" description="In Ref. 2; AAH26778." evidence="6" ref="2">
    <original>R</original>
    <variation>Q</variation>
    <location>
        <position position="220"/>
    </location>
</feature>
<feature type="sequence conflict" description="In Ref. 2; AAH26778." evidence="6" ref="2">
    <original>V</original>
    <variation>I</variation>
    <location>
        <position position="399"/>
    </location>
</feature>
<feature type="sequence conflict" description="In Ref. 2; AAH26778." evidence="6" ref="2">
    <original>G</original>
    <variation>S</variation>
    <location>
        <position position="592"/>
    </location>
</feature>
<feature type="sequence conflict" description="In Ref. 2; AAH26778." evidence="6" ref="2">
    <original>P</original>
    <variation>S</variation>
    <location>
        <position position="754"/>
    </location>
</feature>
<evidence type="ECO:0000250" key="1"/>
<evidence type="ECO:0000250" key="2">
    <source>
        <dbReference type="UniProtKB" id="Q3KR16"/>
    </source>
</evidence>
<evidence type="ECO:0000255" key="3">
    <source>
        <dbReference type="PROSITE-ProRule" id="PRU00062"/>
    </source>
</evidence>
<evidence type="ECO:0000255" key="4">
    <source>
        <dbReference type="PROSITE-ProRule" id="PRU00145"/>
    </source>
</evidence>
<evidence type="ECO:0000256" key="5">
    <source>
        <dbReference type="SAM" id="MobiDB-lite"/>
    </source>
</evidence>
<evidence type="ECO:0000305" key="6"/>
<keyword id="KW-0966">Cell projection</keyword>
<keyword id="KW-0963">Cytoplasm</keyword>
<keyword id="KW-0206">Cytoskeleton</keyword>
<keyword id="KW-0343">GTPase activation</keyword>
<keyword id="KW-1185">Reference proteome</keyword>
<comment type="function">
    <text evidence="1">Guanine nucleotide exchange factor activating the small GTPase RHOA, which, in turn, induces myosin filament formation. Also activates RHOG. Does not activate RAC1, or to a much lower extent than RHOA and RHOG. Part of a functional unit, involving PLEKHG6, MYH10 and RHOA, at the cleavage furrow to advance furrow ingression during cytokinesis. In epithelial cells, required for the formation of microvilli and membrane ruffles on the apical pole. Along with EZR, required for normal macropinocytosis (By similarity).</text>
</comment>
<comment type="subunit">
    <text evidence="1">Interacts with MYH10. Interacts with ELMO1 and EZR (in an open conformation). Interacts with CSPP1 (By similarity).</text>
</comment>
<comment type="subcellular location">
    <subcellularLocation>
        <location evidence="2">Cell projection</location>
        <location evidence="2">Microvillus</location>
    </subcellularLocation>
    <subcellularLocation>
        <location evidence="2">Cytoplasm</location>
        <location evidence="2">Cytoskeleton</location>
        <location evidence="2">Spindle</location>
    </subcellularLocation>
    <subcellularLocation>
        <location evidence="2">Cleavage furrow</location>
    </subcellularLocation>
    <text evidence="2">During mitosis, localizes to the spindle pole, central spindle and cleavage furrow. In epithelial cells, recruited to the apical membrane by EZR where it participates in macropinocytosis.</text>
</comment>
<organism>
    <name type="scientific">Mus musculus</name>
    <name type="common">Mouse</name>
    <dbReference type="NCBI Taxonomy" id="10090"/>
    <lineage>
        <taxon>Eukaryota</taxon>
        <taxon>Metazoa</taxon>
        <taxon>Chordata</taxon>
        <taxon>Craniata</taxon>
        <taxon>Vertebrata</taxon>
        <taxon>Euteleostomi</taxon>
        <taxon>Mammalia</taxon>
        <taxon>Eutheria</taxon>
        <taxon>Euarchontoglires</taxon>
        <taxon>Glires</taxon>
        <taxon>Rodentia</taxon>
        <taxon>Myomorpha</taxon>
        <taxon>Muroidea</taxon>
        <taxon>Muridae</taxon>
        <taxon>Murinae</taxon>
        <taxon>Mus</taxon>
        <taxon>Mus</taxon>
    </lineage>
</organism>
<proteinExistence type="evidence at transcript level"/>
<name>PKHG6_MOUSE</name>
<gene>
    <name type="primary">Plekhg6</name>
</gene>